<name>KI106_MEDTR</name>
<proteinExistence type="evidence at protein level"/>
<evidence type="ECO:0000255" key="1"/>
<evidence type="ECO:0000255" key="2">
    <source>
        <dbReference type="PROSITE-ProRule" id="PRU00498"/>
    </source>
</evidence>
<evidence type="ECO:0000269" key="3">
    <source>
    </source>
</evidence>
<evidence type="ECO:0000303" key="4">
    <source>
    </source>
</evidence>
<evidence type="ECO:0000305" key="5"/>
<evidence type="ECO:0000305" key="6">
    <source>
    </source>
</evidence>
<evidence type="ECO:0000312" key="7">
    <source>
        <dbReference type="EMBL" id="AET02976.1"/>
    </source>
</evidence>
<evidence type="ECO:0000312" key="8">
    <source>
        <dbReference type="EMBL" id="RHN40828.1"/>
    </source>
</evidence>
<protein>
    <recommendedName>
        <fullName evidence="4">Kunitz type trypsin inhibitor 106</fullName>
    </recommendedName>
</protein>
<organism>
    <name type="scientific">Medicago truncatula</name>
    <name type="common">Barrel medic</name>
    <name type="synonym">Medicago tribuloides</name>
    <dbReference type="NCBI Taxonomy" id="3880"/>
    <lineage>
        <taxon>Eukaryota</taxon>
        <taxon>Viridiplantae</taxon>
        <taxon>Streptophyta</taxon>
        <taxon>Embryophyta</taxon>
        <taxon>Tracheophyta</taxon>
        <taxon>Spermatophyta</taxon>
        <taxon>Magnoliopsida</taxon>
        <taxon>eudicotyledons</taxon>
        <taxon>Gunneridae</taxon>
        <taxon>Pentapetalae</taxon>
        <taxon>rosids</taxon>
        <taxon>fabids</taxon>
        <taxon>Fabales</taxon>
        <taxon>Fabaceae</taxon>
        <taxon>Papilionoideae</taxon>
        <taxon>50 kb inversion clade</taxon>
        <taxon>NPAAA clade</taxon>
        <taxon>Hologalegina</taxon>
        <taxon>IRL clade</taxon>
        <taxon>Trifolieae</taxon>
        <taxon>Medicago</taxon>
    </lineage>
</organism>
<dbReference type="EMBL" id="CM001224">
    <property type="protein sequence ID" value="AET02976.1"/>
    <property type="molecule type" value="Genomic_DNA"/>
</dbReference>
<dbReference type="EMBL" id="PSQE01000008">
    <property type="protein sequence ID" value="RHN40828.1"/>
    <property type="molecule type" value="Genomic_DNA"/>
</dbReference>
<dbReference type="RefSeq" id="XP_003628500.1">
    <property type="nucleotide sequence ID" value="XM_003628452.1"/>
</dbReference>
<dbReference type="SMR" id="G7LCV1"/>
<dbReference type="STRING" id="3880.G7LCV1"/>
<dbReference type="MEROPS" id="I03.029"/>
<dbReference type="GlyCosmos" id="G7LCV1">
    <property type="glycosylation" value="2 sites, No reported glycans"/>
</dbReference>
<dbReference type="PaxDb" id="3880-AET02976"/>
<dbReference type="EnsemblPlants" id="rna47048">
    <property type="protein sequence ID" value="RHN40828.1"/>
    <property type="gene ID" value="gene47048"/>
</dbReference>
<dbReference type="GeneID" id="11409843"/>
<dbReference type="Gramene" id="rna47048">
    <property type="protein sequence ID" value="RHN40828.1"/>
    <property type="gene ID" value="gene47048"/>
</dbReference>
<dbReference type="KEGG" id="mtr:11409843"/>
<dbReference type="eggNOG" id="ENOG502S0HP">
    <property type="taxonomic scope" value="Eukaryota"/>
</dbReference>
<dbReference type="HOGENOM" id="CLU_090145_3_0_1"/>
<dbReference type="OMA" id="NIVRESH"/>
<dbReference type="OrthoDB" id="1918435at2759"/>
<dbReference type="Proteomes" id="UP000002051">
    <property type="component" value="Chromosome 8"/>
</dbReference>
<dbReference type="Proteomes" id="UP000265566">
    <property type="component" value="Chromosome 8"/>
</dbReference>
<dbReference type="GO" id="GO:0048046">
    <property type="term" value="C:apoplast"/>
    <property type="evidence" value="ECO:0000314"/>
    <property type="project" value="UniProtKB"/>
</dbReference>
<dbReference type="GO" id="GO:0005615">
    <property type="term" value="C:extracellular space"/>
    <property type="evidence" value="ECO:0000314"/>
    <property type="project" value="UniProtKB"/>
</dbReference>
<dbReference type="GO" id="GO:0004867">
    <property type="term" value="F:serine-type endopeptidase inhibitor activity"/>
    <property type="evidence" value="ECO:0007669"/>
    <property type="project" value="UniProtKB-KW"/>
</dbReference>
<dbReference type="GO" id="GO:0036377">
    <property type="term" value="P:arbuscular mycorrhizal association"/>
    <property type="evidence" value="ECO:0000315"/>
    <property type="project" value="UniProtKB"/>
</dbReference>
<dbReference type="GO" id="GO:0009610">
    <property type="term" value="P:response to symbiotic fungus"/>
    <property type="evidence" value="ECO:0000270"/>
    <property type="project" value="UniProtKB"/>
</dbReference>
<dbReference type="CDD" id="cd23367">
    <property type="entry name" value="beta-trefoil_STI_KPI104-like"/>
    <property type="match status" value="1"/>
</dbReference>
<dbReference type="Gene3D" id="2.80.10.50">
    <property type="match status" value="1"/>
</dbReference>
<dbReference type="InterPro" id="IPR011065">
    <property type="entry name" value="Kunitz_inhibitor_STI-like_sf"/>
</dbReference>
<dbReference type="InterPro" id="IPR002160">
    <property type="entry name" value="Prot_inh_Kunz-lg"/>
</dbReference>
<dbReference type="PANTHER" id="PTHR33107">
    <property type="entry name" value="KUNITZ TRYPSIN INHIBITOR 2"/>
    <property type="match status" value="1"/>
</dbReference>
<dbReference type="PANTHER" id="PTHR33107:SF31">
    <property type="entry name" value="KUNITZ TYPE TRYPSIN INHIBITOR 104"/>
    <property type="match status" value="1"/>
</dbReference>
<dbReference type="Pfam" id="PF00197">
    <property type="entry name" value="Kunitz_legume"/>
    <property type="match status" value="1"/>
</dbReference>
<dbReference type="SMART" id="SM00452">
    <property type="entry name" value="STI"/>
    <property type="match status" value="1"/>
</dbReference>
<dbReference type="SUPFAM" id="SSF50386">
    <property type="entry name" value="STI-like"/>
    <property type="match status" value="1"/>
</dbReference>
<reference key="1">
    <citation type="journal article" date="2011" name="Nature">
        <title>The Medicago genome provides insight into the evolution of rhizobial symbioses.</title>
        <authorList>
            <person name="Young N.D."/>
            <person name="Debelle F."/>
            <person name="Oldroyd G.E.D."/>
            <person name="Geurts R."/>
            <person name="Cannon S.B."/>
            <person name="Udvardi M.K."/>
            <person name="Benedito V.A."/>
            <person name="Mayer K.F.X."/>
            <person name="Gouzy J."/>
            <person name="Schoof H."/>
            <person name="Van de Peer Y."/>
            <person name="Proost S."/>
            <person name="Cook D.R."/>
            <person name="Meyers B.C."/>
            <person name="Spannagl M."/>
            <person name="Cheung F."/>
            <person name="De Mita S."/>
            <person name="Krishnakumar V."/>
            <person name="Gundlach H."/>
            <person name="Zhou S."/>
            <person name="Mudge J."/>
            <person name="Bharti A.K."/>
            <person name="Murray J.D."/>
            <person name="Naoumkina M.A."/>
            <person name="Rosen B."/>
            <person name="Silverstein K.A.T."/>
            <person name="Tang H."/>
            <person name="Rombauts S."/>
            <person name="Zhao P.X."/>
            <person name="Zhou P."/>
            <person name="Barbe V."/>
            <person name="Bardou P."/>
            <person name="Bechner M."/>
            <person name="Bellec A."/>
            <person name="Berger A."/>
            <person name="Berges H."/>
            <person name="Bidwell S."/>
            <person name="Bisseling T."/>
            <person name="Choisne N."/>
            <person name="Couloux A."/>
            <person name="Denny R."/>
            <person name="Deshpande S."/>
            <person name="Dai X."/>
            <person name="Doyle J.J."/>
            <person name="Dudez A.-M."/>
            <person name="Farmer A.D."/>
            <person name="Fouteau S."/>
            <person name="Franken C."/>
            <person name="Gibelin C."/>
            <person name="Gish J."/>
            <person name="Goldstein S."/>
            <person name="Gonzalez A.J."/>
            <person name="Green P.J."/>
            <person name="Hallab A."/>
            <person name="Hartog M."/>
            <person name="Hua A."/>
            <person name="Humphray S.J."/>
            <person name="Jeong D.-H."/>
            <person name="Jing Y."/>
            <person name="Jocker A."/>
            <person name="Kenton S.M."/>
            <person name="Kim D.-J."/>
            <person name="Klee K."/>
            <person name="Lai H."/>
            <person name="Lang C."/>
            <person name="Lin S."/>
            <person name="Macmil S.L."/>
            <person name="Magdelenat G."/>
            <person name="Matthews L."/>
            <person name="McCorrison J."/>
            <person name="Monaghan E.L."/>
            <person name="Mun J.-H."/>
            <person name="Najar F.Z."/>
            <person name="Nicholson C."/>
            <person name="Noirot C."/>
            <person name="O'Bleness M."/>
            <person name="Paule C.R."/>
            <person name="Poulain J."/>
            <person name="Prion F."/>
            <person name="Qin B."/>
            <person name="Qu C."/>
            <person name="Retzel E.F."/>
            <person name="Riddle C."/>
            <person name="Sallet E."/>
            <person name="Samain S."/>
            <person name="Samson N."/>
            <person name="Sanders I."/>
            <person name="Saurat O."/>
            <person name="Scarpelli C."/>
            <person name="Schiex T."/>
            <person name="Segurens B."/>
            <person name="Severin A.J."/>
            <person name="Sherrier D.J."/>
            <person name="Shi R."/>
            <person name="Sims S."/>
            <person name="Singer S.R."/>
            <person name="Sinharoy S."/>
            <person name="Sterck L."/>
            <person name="Viollet A."/>
            <person name="Wang B.-B."/>
            <person name="Wang K."/>
            <person name="Wang M."/>
            <person name="Wang X."/>
            <person name="Warfsmann J."/>
            <person name="Weissenbach J."/>
            <person name="White D.D."/>
            <person name="White J.D."/>
            <person name="Wiley G.B."/>
            <person name="Wincker P."/>
            <person name="Xing Y."/>
            <person name="Yang L."/>
            <person name="Yao Z."/>
            <person name="Ying F."/>
            <person name="Zhai J."/>
            <person name="Zhou L."/>
            <person name="Zuber A."/>
            <person name="Denarie J."/>
            <person name="Dixon R.A."/>
            <person name="May G.D."/>
            <person name="Schwartz D.C."/>
            <person name="Rogers J."/>
            <person name="Quetier F."/>
            <person name="Town C.D."/>
            <person name="Roe B.A."/>
        </authorList>
    </citation>
    <scope>NUCLEOTIDE SEQUENCE [LARGE SCALE GENOMIC DNA]</scope>
    <source>
        <strain>cv. Jemalong A17</strain>
    </source>
</reference>
<reference key="2">
    <citation type="journal article" date="2014" name="BMC Genomics">
        <title>An improved genome release (version Mt4.0) for the model legume Medicago truncatula.</title>
        <authorList>
            <person name="Tang H."/>
            <person name="Krishnakumar V."/>
            <person name="Bidwell S."/>
            <person name="Rosen B."/>
            <person name="Chan A."/>
            <person name="Zhou S."/>
            <person name="Gentzbittel L."/>
            <person name="Childs K.L."/>
            <person name="Yandell M."/>
            <person name="Gundlach H."/>
            <person name="Mayer K.F."/>
            <person name="Schwartz D.C."/>
            <person name="Town C.D."/>
        </authorList>
    </citation>
    <scope>GENOME REANNOTATION</scope>
    <source>
        <strain>cv. Jemalong A17</strain>
    </source>
</reference>
<reference key="3">
    <citation type="journal article" date="2018" name="Nat. Plants">
        <title>Whole-genome landscape of Medicago truncatula symbiotic genes.</title>
        <authorList>
            <person name="Pecrix Y."/>
            <person name="Staton S.E."/>
            <person name="Sallet E."/>
            <person name="Lelandais-Briere C."/>
            <person name="Moreau S."/>
            <person name="Carrere S."/>
            <person name="Blein T."/>
            <person name="Jardinaud M.F."/>
            <person name="Latrasse D."/>
            <person name="Zouine M."/>
            <person name="Zahm M."/>
            <person name="Kreplak J."/>
            <person name="Mayjonade B."/>
            <person name="Satge C."/>
            <person name="Perez M."/>
            <person name="Cauet S."/>
            <person name="Marande W."/>
            <person name="Chantry-Darmon C."/>
            <person name="Lopez-Roques C."/>
            <person name="Bouchez O."/>
            <person name="Berard A."/>
            <person name="Debelle F."/>
            <person name="Munos S."/>
            <person name="Bendahmane A."/>
            <person name="Berges H."/>
            <person name="Niebel A."/>
            <person name="Buitink J."/>
            <person name="Frugier F."/>
            <person name="Benhamed M."/>
            <person name="Crespi M."/>
            <person name="Gouzy J."/>
            <person name="Gamas P."/>
        </authorList>
    </citation>
    <scope>NUCLEOTIDE SEQUENCE [LARGE SCALE GENOMIC DNA]</scope>
    <source>
        <strain>cv. Jemalong A17</strain>
    </source>
</reference>
<reference key="4">
    <citation type="journal article" date="2013" name="Plant J.">
        <title>A tandem Kunitz protease inhibitor (KPI106)-serine carboxypeptidase (SCP1) controls mycorrhiza establishment and arbuscule development in Medicago truncatula.</title>
        <authorList>
            <person name="Rech S.S."/>
            <person name="Heidt S."/>
            <person name="Requena N."/>
        </authorList>
    </citation>
    <scope>FUNCTION</scope>
    <scope>MUTAGENESIS OF LYS-173</scope>
    <scope>TISSUE SPECIFICITY</scope>
    <scope>INDUCTION BY ARBUSCULAR MYCORRHIZAL FUNGI</scope>
    <scope>INTERACTION WITH SCP1 AND CP</scope>
    <scope>DISULFIDE BOND</scope>
    <scope>GENE FAMILY</scope>
    <scope>NOMENCLATURE</scope>
</reference>
<keyword id="KW-0052">Apoplast</keyword>
<keyword id="KW-1015">Disulfide bond</keyword>
<keyword id="KW-0325">Glycoprotein</keyword>
<keyword id="KW-0646">Protease inhibitor</keyword>
<keyword id="KW-1185">Reference proteome</keyword>
<keyword id="KW-0964">Secreted</keyword>
<keyword id="KW-0722">Serine protease inhibitor</keyword>
<keyword id="KW-0732">Signal</keyword>
<sequence>MSMRLSIRTLIILAHVCLFITTTTIAQFVLDTVGEPVEGDEEYFIRPVITNKGGRSTMVSRNESCPLHVGLELTGLGRGLVVKFTPFAPHHDFDDVRVNRDLRITFQASSSCVQSTEWRLGEKDTKSGRRLIITGTDSATNGSYGNFFRIVETPLEGMYNIQWCPTEVCPSCKFECGTVDMLNENGKILLALDGGPLPLVFQKE</sequence>
<accession>G7LCV1</accession>
<gene>
    <name evidence="4" type="primary">KPI106</name>
    <name evidence="7" type="ordered locus">MTR_8g059790</name>
    <name evidence="8" type="ORF">MtrunA17_Chr8g0359161</name>
</gene>
<feature type="signal peptide" evidence="1">
    <location>
        <begin position="1"/>
        <end position="26"/>
    </location>
</feature>
<feature type="chain" id="PRO_5014574211" description="Kunitz type trypsin inhibitor 106">
    <location>
        <begin position="27"/>
        <end position="204"/>
    </location>
</feature>
<feature type="site" description="Important in determining the strength and specificity of the interaction with its subsrate" evidence="3">
    <location>
        <position position="173"/>
    </location>
</feature>
<feature type="glycosylation site" description="N-linked (GlcNAc...) asparagine" evidence="2">
    <location>
        <position position="62"/>
    </location>
</feature>
<feature type="glycosylation site" description="N-linked (GlcNAc...) asparagine" evidence="2">
    <location>
        <position position="141"/>
    </location>
</feature>
<feature type="disulfide bond" evidence="6">
    <location>
        <begin position="65"/>
        <end position="112"/>
    </location>
</feature>
<feature type="disulfide bond" evidence="6">
    <location>
        <begin position="164"/>
        <end position="176"/>
    </location>
</feature>
<feature type="disulfide bond" evidence="6">
    <location>
        <begin position="169"/>
        <end position="172"/>
    </location>
</feature>
<feature type="mutagenesis site" description="Stronger interaction with SCP1." evidence="3">
    <original>K</original>
    <variation>E</variation>
    <location>
        <position position="173"/>
    </location>
</feature>
<comment type="function">
    <text evidence="3">Protease inhibitor that, together with SCP1, controls mycorrhiza establishment and arbuscule development during root colonization by arbuscular mycorrhizal (AM) fungi (e.g. Rhizophagus irregularis), probably by degrading SCP1 in the apoplast of the periarbuscular region.</text>
</comment>
<comment type="subunit">
    <text evidence="3">Interacts with SCP1 and CP.</text>
</comment>
<comment type="subcellular location">
    <subcellularLocation>
        <location evidence="3">Secreted</location>
    </subcellularLocation>
    <subcellularLocation>
        <location evidence="3">Secreted</location>
        <location evidence="3">Extracellular space</location>
        <location evidence="3">Apoplast</location>
    </subcellularLocation>
</comment>
<comment type="tissue specificity">
    <text evidence="3">Expressed at low levels in non-mycorrhizal roots.</text>
</comment>
<comment type="induction">
    <text evidence="3">Accumulates in roots during colonization by arbuscular mycorrhizal (AM) fungi (e.g. Rhizophagus irregularis).</text>
</comment>
<comment type="similarity">
    <text evidence="5">Belongs to the protease inhibitor I3 (leguminous Kunitz-type inhibitor) family.</text>
</comment>